<sequence length="604" mass="64130">MSRSAAASGGPRRPDQHLSPAPCGASGPPETFRTESDGAGTMNKLRQSLRRRKPAYVPEASRPHQWQADEDAVRKGTCSFPVRYLGHVEVEESRGMHVCEDAVKKLKAMGRKSVKSVLWVSADGLRVVDDKTKDLLVDQTIEKVSFCAPDRNLDKAFSYICRDGTTRRWICHCFLALKDSGERLSHAVGCAFAACLERKQRREKECGVTAAFDASRTSFAREGSFRLSGGGRPAEREAGDKKKAEAAAAPAVAPGPAQPGHVSPTPATTSPGEKGEAGTPVAAGTTAAAIPRRHAPLEQLVRQGSFRGFPALSQKNSPFKRQLSLRLNELPSTLQRRTDFQVKGTVPEMEPPGTGDSDGINALCTQISSSFASAGAPASGPPPATTGTSAWGEPSVPAAAAFQPGHKRTPSEAERWLEEVSQVAKAQQQQQQQQQQQQQQQATSVPPMPTMAPTLQPFSAPVGPFDTAAAQVAVFLPPTHMQPPFVPAYPGLGYPPMPRVPVVGITPSQMVANAFCSAAQLQPQPATLLGKAGAFPPPAAPSAPGGQARPRPNGAPWPPEPAPAPAPELDPFEAQWAALEGKPAVEKPSNPFSGDLQKTFEIEL</sequence>
<dbReference type="EMBL" id="U96441">
    <property type="protein sequence ID" value="AAB58697.1"/>
    <property type="molecule type" value="mRNA"/>
</dbReference>
<dbReference type="EMBL" id="CH466593">
    <property type="protein sequence ID" value="EDL24192.1"/>
    <property type="molecule type" value="Genomic_DNA"/>
</dbReference>
<dbReference type="EMBL" id="BC068116">
    <property type="protein sequence ID" value="AAH68116.1"/>
    <property type="molecule type" value="mRNA"/>
</dbReference>
<dbReference type="EMBL" id="BC098097">
    <property type="protein sequence ID" value="AAH98097.1"/>
    <property type="molecule type" value="mRNA"/>
</dbReference>
<dbReference type="CCDS" id="CCDS21016.1"/>
<dbReference type="RefSeq" id="NP_035080.2">
    <property type="nucleotide sequence ID" value="NM_010950.3"/>
</dbReference>
<dbReference type="SMR" id="O08919"/>
<dbReference type="BioGRID" id="201878">
    <property type="interactions" value="6"/>
</dbReference>
<dbReference type="FunCoup" id="O08919">
    <property type="interactions" value="1040"/>
</dbReference>
<dbReference type="IntAct" id="O08919">
    <property type="interactions" value="3"/>
</dbReference>
<dbReference type="STRING" id="10090.ENSMUSP00000078245"/>
<dbReference type="GlyGen" id="O08919">
    <property type="glycosylation" value="4 sites, 1 O-linked glycan (3 sites)"/>
</dbReference>
<dbReference type="iPTMnet" id="O08919"/>
<dbReference type="PhosphoSitePlus" id="O08919"/>
<dbReference type="SwissPalm" id="O08919"/>
<dbReference type="jPOST" id="O08919"/>
<dbReference type="PaxDb" id="10090-ENSMUSP00000078245"/>
<dbReference type="PeptideAtlas" id="O08919"/>
<dbReference type="ProteomicsDB" id="295465"/>
<dbReference type="Pumba" id="O08919"/>
<dbReference type="Antibodypedia" id="30612">
    <property type="antibodies" value="269 antibodies from 31 providers"/>
</dbReference>
<dbReference type="DNASU" id="18223"/>
<dbReference type="Ensembl" id="ENSMUST00000079258.7">
    <property type="protein sequence ID" value="ENSMUSP00000078245.7"/>
    <property type="gene ID" value="ENSMUSG00000063160.13"/>
</dbReference>
<dbReference type="GeneID" id="18223"/>
<dbReference type="KEGG" id="mmu:18223"/>
<dbReference type="UCSC" id="uc009fvq.1">
    <property type="organism name" value="mouse"/>
</dbReference>
<dbReference type="AGR" id="MGI:894702"/>
<dbReference type="CTD" id="9253"/>
<dbReference type="MGI" id="MGI:894702">
    <property type="gene designation" value="Numbl"/>
</dbReference>
<dbReference type="VEuPathDB" id="HostDB:ENSMUSG00000063160"/>
<dbReference type="eggNOG" id="KOG3537">
    <property type="taxonomic scope" value="Eukaryota"/>
</dbReference>
<dbReference type="GeneTree" id="ENSGT00940000160957"/>
<dbReference type="HOGENOM" id="CLU_031797_1_1_1"/>
<dbReference type="InParanoid" id="O08919"/>
<dbReference type="OMA" id="PWMSRSA"/>
<dbReference type="PhylomeDB" id="O08919"/>
<dbReference type="TreeFam" id="TF314159"/>
<dbReference type="BioGRID-ORCS" id="18223">
    <property type="hits" value="4 hits in 77 CRISPR screens"/>
</dbReference>
<dbReference type="CD-CODE" id="CE726F99">
    <property type="entry name" value="Postsynaptic density"/>
</dbReference>
<dbReference type="ChiTaRS" id="Numbl">
    <property type="organism name" value="mouse"/>
</dbReference>
<dbReference type="PRO" id="PR:O08919"/>
<dbReference type="Proteomes" id="UP000000589">
    <property type="component" value="Chromosome 7"/>
</dbReference>
<dbReference type="RNAct" id="O08919">
    <property type="molecule type" value="protein"/>
</dbReference>
<dbReference type="Bgee" id="ENSMUSG00000063160">
    <property type="expression patterns" value="Expressed in dentate gyrus of hippocampal formation granule cell and 195 other cell types or tissues"/>
</dbReference>
<dbReference type="GO" id="GO:0005737">
    <property type="term" value="C:cytoplasm"/>
    <property type="evidence" value="ECO:0000314"/>
    <property type="project" value="MGI"/>
</dbReference>
<dbReference type="GO" id="GO:0098978">
    <property type="term" value="C:glutamatergic synapse"/>
    <property type="evidence" value="ECO:0007669"/>
    <property type="project" value="Ensembl"/>
</dbReference>
<dbReference type="GO" id="GO:0034332">
    <property type="term" value="P:adherens junction organization"/>
    <property type="evidence" value="ECO:0000316"/>
    <property type="project" value="MGI"/>
</dbReference>
<dbReference type="GO" id="GO:0007409">
    <property type="term" value="P:axonogenesis"/>
    <property type="evidence" value="ECO:0000315"/>
    <property type="project" value="MGI"/>
</dbReference>
<dbReference type="GO" id="GO:0019221">
    <property type="term" value="P:cytokine-mediated signaling pathway"/>
    <property type="evidence" value="ECO:0000250"/>
    <property type="project" value="UniProtKB"/>
</dbReference>
<dbReference type="GO" id="GO:0030900">
    <property type="term" value="P:forebrain development"/>
    <property type="evidence" value="ECO:0000315"/>
    <property type="project" value="MGI"/>
</dbReference>
<dbReference type="GO" id="GO:0021670">
    <property type="term" value="P:lateral ventricle development"/>
    <property type="evidence" value="ECO:0000315"/>
    <property type="project" value="UniProtKB"/>
</dbReference>
<dbReference type="GO" id="GO:0007399">
    <property type="term" value="P:nervous system development"/>
    <property type="evidence" value="ECO:0000315"/>
    <property type="project" value="MGI"/>
</dbReference>
<dbReference type="GO" id="GO:0021849">
    <property type="term" value="P:neuroblast division in subventricular zone"/>
    <property type="evidence" value="ECO:0000315"/>
    <property type="project" value="UniProtKB"/>
</dbReference>
<dbReference type="GO" id="GO:0007405">
    <property type="term" value="P:neuroblast proliferation"/>
    <property type="evidence" value="ECO:0000316"/>
    <property type="project" value="MGI"/>
</dbReference>
<dbReference type="GO" id="GO:0050775">
    <property type="term" value="P:positive regulation of dendrite morphogenesis"/>
    <property type="evidence" value="ECO:0007669"/>
    <property type="project" value="Ensembl"/>
</dbReference>
<dbReference type="GO" id="GO:0050769">
    <property type="term" value="P:positive regulation of neurogenesis"/>
    <property type="evidence" value="ECO:0000315"/>
    <property type="project" value="UniProtKB"/>
</dbReference>
<dbReference type="GO" id="GO:0019538">
    <property type="term" value="P:protein metabolic process"/>
    <property type="evidence" value="ECO:0000250"/>
    <property type="project" value="UniProtKB"/>
</dbReference>
<dbReference type="GO" id="GO:0150052">
    <property type="term" value="P:regulation of postsynapse assembly"/>
    <property type="evidence" value="ECO:0007669"/>
    <property type="project" value="Ensembl"/>
</dbReference>
<dbReference type="CDD" id="cd01268">
    <property type="entry name" value="PTB_Numb"/>
    <property type="match status" value="1"/>
</dbReference>
<dbReference type="FunFam" id="2.30.29.30:FF:000031">
    <property type="entry name" value="protein numb isoform X1"/>
    <property type="match status" value="1"/>
</dbReference>
<dbReference type="Gene3D" id="2.30.29.30">
    <property type="entry name" value="Pleckstrin-homology domain (PH domain)/Phosphotyrosine-binding domain (PTB)"/>
    <property type="match status" value="1"/>
</dbReference>
<dbReference type="InterPro" id="IPR016698">
    <property type="entry name" value="Numb/numb-like"/>
</dbReference>
<dbReference type="InterPro" id="IPR010449">
    <property type="entry name" value="Numb_domain"/>
</dbReference>
<dbReference type="InterPro" id="IPR011993">
    <property type="entry name" value="PH-like_dom_sf"/>
</dbReference>
<dbReference type="InterPro" id="IPR006020">
    <property type="entry name" value="PTB/PI_dom"/>
</dbReference>
<dbReference type="PANTHER" id="PTHR47368">
    <property type="entry name" value="NUMB"/>
    <property type="match status" value="1"/>
</dbReference>
<dbReference type="PANTHER" id="PTHR47368:SF4">
    <property type="entry name" value="NUMB-LIKE PROTEIN"/>
    <property type="match status" value="1"/>
</dbReference>
<dbReference type="Pfam" id="PF06311">
    <property type="entry name" value="NumbF"/>
    <property type="match status" value="1"/>
</dbReference>
<dbReference type="Pfam" id="PF00640">
    <property type="entry name" value="PID"/>
    <property type="match status" value="1"/>
</dbReference>
<dbReference type="PIRSF" id="PIRSF017607">
    <property type="entry name" value="Numb/numb-like"/>
    <property type="match status" value="1"/>
</dbReference>
<dbReference type="SMART" id="SM00462">
    <property type="entry name" value="PTB"/>
    <property type="match status" value="1"/>
</dbReference>
<dbReference type="SUPFAM" id="SSF50729">
    <property type="entry name" value="PH domain-like"/>
    <property type="match status" value="1"/>
</dbReference>
<dbReference type="PROSITE" id="PS01179">
    <property type="entry name" value="PID"/>
    <property type="match status" value="1"/>
</dbReference>
<proteinExistence type="evidence at protein level"/>
<name>NUMBL_MOUSE</name>
<gene>
    <name type="primary">Numbl</name>
    <name type="synonym">Nbl</name>
</gene>
<comment type="function">
    <text evidence="5 6 7 8">Plays a role in the process of neurogenesis. Required throughout embryonic neurogenesis to maintain neural progenitor cells, also called radial glial cells (RGCs), by allowing their daughter cells to choose progenitor over neuronal cell fate. Not required for the proliferation of neural progenitor cells before the onset of embryonic neurogenesis. Also required postnatally in the subventricular zone (SVZ) neurogenesis by regulating SVZ neuroblasts survival and ependymal wall integrity. Negative regulator of NF-kappa-B signaling pathway. The inhibition of NF-kappa-B activation is mediated at least in part, by preventing MAP3K7IP2 to interact with polyubiquitin chains of TRAF6 and RIPK1 and by stimulating the 'Lys-48'-linked polyubiquitination and degradation of TRAF6 in cortical neurons.</text>
</comment>
<comment type="subunit">
    <text evidence="1">Interacts (via PTB domain) with MAP3K7IP2 (via C-terminal). Interacts (via C-terminal) with TRAF6 (via TRAF domains) (By similarity). Associates with EPS15 and NOTCH1.</text>
</comment>
<comment type="subcellular location">
    <subcellularLocation>
        <location evidence="8">Cytoplasm</location>
    </subcellularLocation>
    <text>Symmetrically distributed throughout the cytoplasm in non dividing neuroblasts of the CNS.</text>
</comment>
<comment type="tissue specificity">
    <text evidence="8">Preferentially expressed in the nervous system. In the developing neocortex, expressed in postmitotic neurons in the cortical plate but not in progenitors within the ventricular zone.</text>
</comment>
<comment type="developmental stage">
    <text evidence="5 6 8">Expressed in neural progenitor and neuron cells throughout the developing nervous system. Expressed in somites and throughout the neural tube from 8.5 dpc, onward.</text>
</comment>
<comment type="domain">
    <text evidence="1">The PTB domain is necessary for the inhibition of MAP3K7IP2-mediated activation of NF-kappa-B.</text>
</comment>
<comment type="disruption phenotype">
    <text evidence="5 6 7">No visible phenotype. Mutants are viable and fertile. Mice lacking both Numb and Numbl genes die around 9.5 dpc, with severe defects in somite and vasculature formation, neuronal tube closure and axial turning. Conditional double-knockout (cdKO) mutants (Numb and Numbl genes), with expression abrogated in neural progenitor cells from 8.5 dpc (just before the onset of neurogenesis), display a loss of neural progenitor cells formation and an overexpression of neurons as neurogenesis progresses; cdKO mutants become necrotic at 12.5 dpc and die around this stage. Conditional double-knockout (cdKO) mutants (Numb and Numbl genes), with expression abrogated in neural progenitor cells from 10.5 dpc (just after the onset of neurogenesis), display a premature depletion of neural progenitor cells in the dorsal forebrain ventrical zone of the neocortex and in the hippocampal CA fields as neurogenesis progresses; cdKO mutants are viable and fertile, but showed a reduction in the thickness of the neocortex and the hippocampus and an enlargement of the lateral ventricles. Tamoxifen-inducible double-knockout (cdKO) mutants (Numb and Numbl genes), with expression abrogated postnatally in the subventricular zone (SVZ) neuroprogenitors and in ependymal cells, display a loss of SVZ neuroblasts and show a disorganized ependyma lacking both interdigitation junction between neighboring cells and increasing number of separated cells.</text>
</comment>
<organism>
    <name type="scientific">Mus musculus</name>
    <name type="common">Mouse</name>
    <dbReference type="NCBI Taxonomy" id="10090"/>
    <lineage>
        <taxon>Eukaryota</taxon>
        <taxon>Metazoa</taxon>
        <taxon>Chordata</taxon>
        <taxon>Craniata</taxon>
        <taxon>Vertebrata</taxon>
        <taxon>Euteleostomi</taxon>
        <taxon>Mammalia</taxon>
        <taxon>Eutheria</taxon>
        <taxon>Euarchontoglires</taxon>
        <taxon>Glires</taxon>
        <taxon>Rodentia</taxon>
        <taxon>Myomorpha</taxon>
        <taxon>Muroidea</taxon>
        <taxon>Muridae</taxon>
        <taxon>Murinae</taxon>
        <taxon>Mus</taxon>
        <taxon>Mus</taxon>
    </lineage>
</organism>
<evidence type="ECO:0000250" key="1"/>
<evidence type="ECO:0000250" key="2">
    <source>
        <dbReference type="UniProtKB" id="Q9Y6R0"/>
    </source>
</evidence>
<evidence type="ECO:0000255" key="3">
    <source>
        <dbReference type="PROSITE-ProRule" id="PRU00148"/>
    </source>
</evidence>
<evidence type="ECO:0000256" key="4">
    <source>
        <dbReference type="SAM" id="MobiDB-lite"/>
    </source>
</evidence>
<evidence type="ECO:0000269" key="5">
    <source>
    </source>
</evidence>
<evidence type="ECO:0000269" key="6">
    <source>
    </source>
</evidence>
<evidence type="ECO:0000269" key="7">
    <source>
    </source>
</evidence>
<evidence type="ECO:0000269" key="8">
    <source>
    </source>
</evidence>
<evidence type="ECO:0000305" key="9"/>
<evidence type="ECO:0007744" key="10">
    <source>
    </source>
</evidence>
<keyword id="KW-0963">Cytoplasm</keyword>
<keyword id="KW-0217">Developmental protein</keyword>
<keyword id="KW-0524">Neurogenesis</keyword>
<keyword id="KW-0597">Phosphoprotein</keyword>
<keyword id="KW-1185">Reference proteome</keyword>
<keyword id="KW-0833">Ubl conjugation pathway</keyword>
<accession>O08919</accession>
<accession>Q4QQQ2</accession>
<accession>Q6NVG8</accession>
<protein>
    <recommendedName>
        <fullName>Numb-like protein</fullName>
    </recommendedName>
</protein>
<reference key="1">
    <citation type="journal article" date="1997" name="Development">
        <title>Differential expression of mammalian Numb, Numblike and Notch1 suggests distinct roles during mouse cortical neurogenesis.</title>
        <authorList>
            <person name="Zhong W."/>
            <person name="Jiang M.-M."/>
            <person name="Weinmaster G."/>
            <person name="Jan L.Y."/>
            <person name="Jan Y.N."/>
        </authorList>
    </citation>
    <scope>NUCLEOTIDE SEQUENCE [MRNA]</scope>
    <scope>FUNCTION</scope>
    <scope>SUBCELLULAR LOCATION</scope>
    <scope>TISSUE SPECIFICITY</scope>
    <scope>DEVELOPMENTAL STAGE</scope>
    <source>
        <tissue>Embryo</tissue>
    </source>
</reference>
<reference key="2">
    <citation type="submission" date="2005-09" db="EMBL/GenBank/DDBJ databases">
        <authorList>
            <person name="Mural R.J."/>
            <person name="Adams M.D."/>
            <person name="Myers E.W."/>
            <person name="Smith H.O."/>
            <person name="Venter J.C."/>
        </authorList>
    </citation>
    <scope>NUCLEOTIDE SEQUENCE [LARGE SCALE GENOMIC DNA]</scope>
</reference>
<reference key="3">
    <citation type="journal article" date="2004" name="Genome Res.">
        <title>The status, quality, and expansion of the NIH full-length cDNA project: the Mammalian Gene Collection (MGC).</title>
        <authorList>
            <consortium name="The MGC Project Team"/>
        </authorList>
    </citation>
    <scope>NUCLEOTIDE SEQUENCE [LARGE SCALE MRNA]</scope>
    <source>
        <strain>C57BL/6J</strain>
        <tissue>Brain</tissue>
    </source>
</reference>
<reference key="4">
    <citation type="journal article" date="2002" name="Nature">
        <title>Progenitor cell maintenance requires numb and numblike during mouse neurogenesis.</title>
        <authorList>
            <person name="Petersen P.H."/>
            <person name="Zou K."/>
            <person name="Hwang J.K."/>
            <person name="Jan Y.N."/>
            <person name="Zhong W."/>
        </authorList>
    </citation>
    <scope>FUNCTION</scope>
    <scope>DISRUPTION PHENOTYPE</scope>
    <scope>DEVELOPMENTAL STAGE</scope>
</reference>
<reference key="5">
    <citation type="journal article" date="2004" name="Nat. Neurosci.">
        <title>Continuing role for mouse Numb and Numbl in maintaining progenitor cells during cortical neurogenesis.</title>
        <authorList>
            <person name="Petersen P.H."/>
            <person name="Zou K."/>
            <person name="Krauss S."/>
            <person name="Zhong W."/>
        </authorList>
    </citation>
    <scope>FUNCTION</scope>
    <scope>DISRUPTION PHENOTYPE</scope>
    <scope>DEVELOPMENTAL STAGE</scope>
</reference>
<reference key="6">
    <citation type="journal article" date="2006" name="Cell">
        <title>Postnatal deletion of Numb/Numblike reveals repair and remodeling capacity in the subventricular neurogenic niche.</title>
        <authorList>
            <person name="Kuo C.T."/>
            <person name="Mirzadeh Z."/>
            <person name="Soriano-Navarro M."/>
            <person name="Rasin M."/>
            <person name="Wang D."/>
            <person name="Shen J."/>
            <person name="Sestan N."/>
            <person name="Garcia-Verdugo J."/>
            <person name="Alvarez-Buylla A."/>
            <person name="Jan L.Y."/>
            <person name="Jan Y.N."/>
        </authorList>
    </citation>
    <scope>FUNCTION</scope>
    <scope>DISRUPTION PHENOTYPE</scope>
</reference>
<reference key="7">
    <citation type="journal article" date="2007" name="Mol. Cell. Proteomics">
        <title>Qualitative and quantitative analyses of protein phosphorylation in naive and stimulated mouse synaptosomal preparations.</title>
        <authorList>
            <person name="Munton R.P."/>
            <person name="Tweedie-Cullen R."/>
            <person name="Livingstone-Zatchej M."/>
            <person name="Weinandy F."/>
            <person name="Waidelich M."/>
            <person name="Longo D."/>
            <person name="Gehrig P."/>
            <person name="Potthast F."/>
            <person name="Rutishauser D."/>
            <person name="Gerrits B."/>
            <person name="Panse C."/>
            <person name="Schlapbach R."/>
            <person name="Mansuy I.M."/>
        </authorList>
    </citation>
    <scope>IDENTIFICATION BY MASS SPECTROMETRY [LARGE SCALE ANALYSIS]</scope>
    <source>
        <tissue>Brain cortex</tissue>
    </source>
</reference>
<reference key="8">
    <citation type="journal article" date="2010" name="Cell">
        <title>A tissue-specific atlas of mouse protein phosphorylation and expression.</title>
        <authorList>
            <person name="Huttlin E.L."/>
            <person name="Jedrychowski M.P."/>
            <person name="Elias J.E."/>
            <person name="Goswami T."/>
            <person name="Rad R."/>
            <person name="Beausoleil S.A."/>
            <person name="Villen J."/>
            <person name="Haas W."/>
            <person name="Sowa M.E."/>
            <person name="Gygi S.P."/>
        </authorList>
    </citation>
    <scope>PHOSPHORYLATION [LARGE SCALE ANALYSIS] AT SER-411</scope>
    <scope>IDENTIFICATION BY MASS SPECTROMETRY [LARGE SCALE ANALYSIS]</scope>
    <source>
        <tissue>Brain</tissue>
    </source>
</reference>
<feature type="chain" id="PRO_0000058000" description="Numb-like protein">
    <location>
        <begin position="1"/>
        <end position="604"/>
    </location>
</feature>
<feature type="domain" description="PID" evidence="3">
    <location>
        <begin position="74"/>
        <end position="225"/>
    </location>
</feature>
<feature type="region of interest" description="Disordered" evidence="4">
    <location>
        <begin position="1"/>
        <end position="68"/>
    </location>
</feature>
<feature type="region of interest" description="Disordered" evidence="4">
    <location>
        <begin position="223"/>
        <end position="283"/>
    </location>
</feature>
<feature type="region of interest" description="Disordered" evidence="4">
    <location>
        <begin position="372"/>
        <end position="457"/>
    </location>
</feature>
<feature type="region of interest" description="Disordered" evidence="4">
    <location>
        <begin position="531"/>
        <end position="604"/>
    </location>
</feature>
<feature type="compositionally biased region" description="Basic and acidic residues" evidence="4">
    <location>
        <begin position="233"/>
        <end position="245"/>
    </location>
</feature>
<feature type="compositionally biased region" description="Low complexity" evidence="4">
    <location>
        <begin position="246"/>
        <end position="260"/>
    </location>
</feature>
<feature type="compositionally biased region" description="Basic and acidic residues" evidence="4">
    <location>
        <begin position="409"/>
        <end position="418"/>
    </location>
</feature>
<feature type="compositionally biased region" description="Low complexity" evidence="4">
    <location>
        <begin position="427"/>
        <end position="441"/>
    </location>
</feature>
<feature type="compositionally biased region" description="Low complexity" evidence="4">
    <location>
        <begin position="542"/>
        <end position="552"/>
    </location>
</feature>
<feature type="compositionally biased region" description="Pro residues" evidence="4">
    <location>
        <begin position="553"/>
        <end position="568"/>
    </location>
</feature>
<feature type="modified residue" description="Phosphoserine" evidence="2">
    <location>
        <position position="224"/>
    </location>
</feature>
<feature type="modified residue" description="Phosphoserine" evidence="2">
    <location>
        <position position="228"/>
    </location>
</feature>
<feature type="modified residue" description="Phosphoserine" evidence="2">
    <location>
        <position position="263"/>
    </location>
</feature>
<feature type="modified residue" description="Phosphothreonine" evidence="2">
    <location>
        <position position="279"/>
    </location>
</feature>
<feature type="modified residue" description="Phosphoserine" evidence="10">
    <location>
        <position position="411"/>
    </location>
</feature>
<feature type="sequence conflict" description="In Ref. 1; AAB58697." evidence="9" ref="1">
    <original>P</original>
    <variation>A</variation>
    <location>
        <position position="28"/>
    </location>
</feature>
<feature type="sequence conflict" description="In Ref. 1; AAB58697." evidence="9" ref="1">
    <location>
        <position position="244"/>
    </location>
</feature>
<feature type="sequence conflict" description="In Ref. 3; AAH68116." evidence="9" ref="3">
    <original>S</original>
    <variation>F</variation>
    <location>
        <position position="589"/>
    </location>
</feature>